<protein>
    <recommendedName>
        <fullName evidence="1">Chorismate synthase</fullName>
        <shortName evidence="1">CS</shortName>
        <ecNumber evidence="1">4.2.3.5</ecNumber>
    </recommendedName>
    <alternativeName>
        <fullName evidence="1">5-enolpyruvylshikimate-3-phosphate phospholyase</fullName>
    </alternativeName>
</protein>
<sequence>MAGNTIGQLFRVTTFGESHGLALGCIVDGVPPGIPLTEADLQHDLDRRRPGTSRYTTQRREPDQVKILSGVFDGVTTGTSIGLLIENTDQRSQDYSAIKDVFRPGHADYTYEQKYGLRDYRGGGRSSARETAMRVAAGAIAKKYLAEKFGIEIRGCLTQMGDIPLEIKDWQQVERNPFFCPDADKLDALDELMRALKKEGDSIGAKVTVIASGVPAGLGEPVFDRLDADIAHALMSINAVKGVEIGEGFKVVALRGSQNRDEITAQGFQSNHAGGILGGISSGQHIVAHMALKPTSSITVPGRTINRMGEEVEMITKGRHDPCVGIRAVPIAEAMLAIVLMDHLLRHRAQNADVKTEIPRW</sequence>
<accession>A9MJ42</accession>
<keyword id="KW-0028">Amino-acid biosynthesis</keyword>
<keyword id="KW-0057">Aromatic amino acid biosynthesis</keyword>
<keyword id="KW-0274">FAD</keyword>
<keyword id="KW-0285">Flavoprotein</keyword>
<keyword id="KW-0288">FMN</keyword>
<keyword id="KW-0456">Lyase</keyword>
<keyword id="KW-0521">NADP</keyword>
<keyword id="KW-1185">Reference proteome</keyword>
<dbReference type="EC" id="4.2.3.5" evidence="1"/>
<dbReference type="EMBL" id="CP000880">
    <property type="protein sequence ID" value="ABX20442.1"/>
    <property type="molecule type" value="Genomic_DNA"/>
</dbReference>
<dbReference type="SMR" id="A9MJ42"/>
<dbReference type="STRING" id="41514.SARI_00516"/>
<dbReference type="KEGG" id="ses:SARI_00516"/>
<dbReference type="HOGENOM" id="CLU_034547_0_2_6"/>
<dbReference type="UniPathway" id="UPA00053">
    <property type="reaction ID" value="UER00090"/>
</dbReference>
<dbReference type="Proteomes" id="UP000002084">
    <property type="component" value="Chromosome"/>
</dbReference>
<dbReference type="GO" id="GO:0005829">
    <property type="term" value="C:cytosol"/>
    <property type="evidence" value="ECO:0007669"/>
    <property type="project" value="TreeGrafter"/>
</dbReference>
<dbReference type="GO" id="GO:0004107">
    <property type="term" value="F:chorismate synthase activity"/>
    <property type="evidence" value="ECO:0007669"/>
    <property type="project" value="UniProtKB-UniRule"/>
</dbReference>
<dbReference type="GO" id="GO:0010181">
    <property type="term" value="F:FMN binding"/>
    <property type="evidence" value="ECO:0007669"/>
    <property type="project" value="TreeGrafter"/>
</dbReference>
<dbReference type="GO" id="GO:0008652">
    <property type="term" value="P:amino acid biosynthetic process"/>
    <property type="evidence" value="ECO:0007669"/>
    <property type="project" value="UniProtKB-KW"/>
</dbReference>
<dbReference type="GO" id="GO:0009073">
    <property type="term" value="P:aromatic amino acid family biosynthetic process"/>
    <property type="evidence" value="ECO:0007669"/>
    <property type="project" value="UniProtKB-KW"/>
</dbReference>
<dbReference type="GO" id="GO:0009423">
    <property type="term" value="P:chorismate biosynthetic process"/>
    <property type="evidence" value="ECO:0007669"/>
    <property type="project" value="UniProtKB-UniRule"/>
</dbReference>
<dbReference type="CDD" id="cd07304">
    <property type="entry name" value="Chorismate_synthase"/>
    <property type="match status" value="1"/>
</dbReference>
<dbReference type="FunFam" id="3.60.150.10:FF:000001">
    <property type="entry name" value="Chorismate synthase"/>
    <property type="match status" value="1"/>
</dbReference>
<dbReference type="Gene3D" id="3.60.150.10">
    <property type="entry name" value="Chorismate synthase AroC"/>
    <property type="match status" value="1"/>
</dbReference>
<dbReference type="HAMAP" id="MF_00300">
    <property type="entry name" value="Chorismate_synth"/>
    <property type="match status" value="1"/>
</dbReference>
<dbReference type="InterPro" id="IPR000453">
    <property type="entry name" value="Chorismate_synth"/>
</dbReference>
<dbReference type="InterPro" id="IPR035904">
    <property type="entry name" value="Chorismate_synth_AroC_sf"/>
</dbReference>
<dbReference type="InterPro" id="IPR020541">
    <property type="entry name" value="Chorismate_synthase_CS"/>
</dbReference>
<dbReference type="NCBIfam" id="TIGR00033">
    <property type="entry name" value="aroC"/>
    <property type="match status" value="1"/>
</dbReference>
<dbReference type="NCBIfam" id="NF003793">
    <property type="entry name" value="PRK05382.1"/>
    <property type="match status" value="1"/>
</dbReference>
<dbReference type="PANTHER" id="PTHR21085">
    <property type="entry name" value="CHORISMATE SYNTHASE"/>
    <property type="match status" value="1"/>
</dbReference>
<dbReference type="PANTHER" id="PTHR21085:SF0">
    <property type="entry name" value="CHORISMATE SYNTHASE"/>
    <property type="match status" value="1"/>
</dbReference>
<dbReference type="Pfam" id="PF01264">
    <property type="entry name" value="Chorismate_synt"/>
    <property type="match status" value="1"/>
</dbReference>
<dbReference type="PIRSF" id="PIRSF001456">
    <property type="entry name" value="Chorismate_synth"/>
    <property type="match status" value="1"/>
</dbReference>
<dbReference type="SUPFAM" id="SSF103263">
    <property type="entry name" value="Chorismate synthase, AroC"/>
    <property type="match status" value="1"/>
</dbReference>
<dbReference type="PROSITE" id="PS00787">
    <property type="entry name" value="CHORISMATE_SYNTHASE_1"/>
    <property type="match status" value="1"/>
</dbReference>
<dbReference type="PROSITE" id="PS00788">
    <property type="entry name" value="CHORISMATE_SYNTHASE_2"/>
    <property type="match status" value="1"/>
</dbReference>
<dbReference type="PROSITE" id="PS00789">
    <property type="entry name" value="CHORISMATE_SYNTHASE_3"/>
    <property type="match status" value="1"/>
</dbReference>
<name>AROC_SALAR</name>
<feature type="chain" id="PRO_1000079006" description="Chorismate synthase">
    <location>
        <begin position="1"/>
        <end position="361"/>
    </location>
</feature>
<feature type="binding site" evidence="1">
    <location>
        <position position="48"/>
    </location>
    <ligand>
        <name>NADP(+)</name>
        <dbReference type="ChEBI" id="CHEBI:58349"/>
    </ligand>
</feature>
<feature type="binding site" evidence="1">
    <location>
        <position position="54"/>
    </location>
    <ligand>
        <name>NADP(+)</name>
        <dbReference type="ChEBI" id="CHEBI:58349"/>
    </ligand>
</feature>
<feature type="binding site" evidence="1">
    <location>
        <begin position="125"/>
        <end position="127"/>
    </location>
    <ligand>
        <name>FMN</name>
        <dbReference type="ChEBI" id="CHEBI:58210"/>
    </ligand>
</feature>
<feature type="binding site" evidence="1">
    <location>
        <begin position="238"/>
        <end position="239"/>
    </location>
    <ligand>
        <name>FMN</name>
        <dbReference type="ChEBI" id="CHEBI:58210"/>
    </ligand>
</feature>
<feature type="binding site" evidence="1">
    <location>
        <position position="278"/>
    </location>
    <ligand>
        <name>FMN</name>
        <dbReference type="ChEBI" id="CHEBI:58210"/>
    </ligand>
</feature>
<feature type="binding site" evidence="1">
    <location>
        <begin position="293"/>
        <end position="297"/>
    </location>
    <ligand>
        <name>FMN</name>
        <dbReference type="ChEBI" id="CHEBI:58210"/>
    </ligand>
</feature>
<feature type="binding site" evidence="1">
    <location>
        <position position="319"/>
    </location>
    <ligand>
        <name>FMN</name>
        <dbReference type="ChEBI" id="CHEBI:58210"/>
    </ligand>
</feature>
<gene>
    <name evidence="1" type="primary">aroC</name>
    <name type="ordered locus">SARI_00516</name>
</gene>
<evidence type="ECO:0000255" key="1">
    <source>
        <dbReference type="HAMAP-Rule" id="MF_00300"/>
    </source>
</evidence>
<proteinExistence type="inferred from homology"/>
<comment type="function">
    <text evidence="1">Catalyzes the anti-1,4-elimination of the C-3 phosphate and the C-6 proR hydrogen from 5-enolpyruvylshikimate-3-phosphate (EPSP) to yield chorismate, which is the branch point compound that serves as the starting substrate for the three terminal pathways of aromatic amino acid biosynthesis. This reaction introduces a second double bond into the aromatic ring system.</text>
</comment>
<comment type="catalytic activity">
    <reaction evidence="1">
        <text>5-O-(1-carboxyvinyl)-3-phosphoshikimate = chorismate + phosphate</text>
        <dbReference type="Rhea" id="RHEA:21020"/>
        <dbReference type="ChEBI" id="CHEBI:29748"/>
        <dbReference type="ChEBI" id="CHEBI:43474"/>
        <dbReference type="ChEBI" id="CHEBI:57701"/>
        <dbReference type="EC" id="4.2.3.5"/>
    </reaction>
</comment>
<comment type="cofactor">
    <cofactor evidence="1">
        <name>FMNH2</name>
        <dbReference type="ChEBI" id="CHEBI:57618"/>
    </cofactor>
    <text evidence="1">Reduced FMN (FMNH(2)).</text>
</comment>
<comment type="pathway">
    <text evidence="1">Metabolic intermediate biosynthesis; chorismate biosynthesis; chorismate from D-erythrose 4-phosphate and phosphoenolpyruvate: step 7/7.</text>
</comment>
<comment type="subunit">
    <text evidence="1">Homotetramer.</text>
</comment>
<comment type="similarity">
    <text evidence="1">Belongs to the chorismate synthase family.</text>
</comment>
<organism>
    <name type="scientific">Salmonella arizonae (strain ATCC BAA-731 / CDC346-86 / RSK2980)</name>
    <dbReference type="NCBI Taxonomy" id="41514"/>
    <lineage>
        <taxon>Bacteria</taxon>
        <taxon>Pseudomonadati</taxon>
        <taxon>Pseudomonadota</taxon>
        <taxon>Gammaproteobacteria</taxon>
        <taxon>Enterobacterales</taxon>
        <taxon>Enterobacteriaceae</taxon>
        <taxon>Salmonella</taxon>
    </lineage>
</organism>
<reference key="1">
    <citation type="submission" date="2007-11" db="EMBL/GenBank/DDBJ databases">
        <authorList>
            <consortium name="The Salmonella enterica serovar Arizonae Genome Sequencing Project"/>
            <person name="McClelland M."/>
            <person name="Sanderson E.K."/>
            <person name="Porwollik S."/>
            <person name="Spieth J."/>
            <person name="Clifton W.S."/>
            <person name="Fulton R."/>
            <person name="Chunyan W."/>
            <person name="Wollam A."/>
            <person name="Shah N."/>
            <person name="Pepin K."/>
            <person name="Bhonagiri V."/>
            <person name="Nash W."/>
            <person name="Johnson M."/>
            <person name="Thiruvilangam P."/>
            <person name="Wilson R."/>
        </authorList>
    </citation>
    <scope>NUCLEOTIDE SEQUENCE [LARGE SCALE GENOMIC DNA]</scope>
    <source>
        <strain>ATCC BAA-731 / CDC346-86 / RSK2980</strain>
    </source>
</reference>